<accession>Q9UTA7</accession>
<sequence length="654" mass="74716">MSNLILTPSNNGTERPYRSRKTRPCDNCRLRKSRCVVESIGNPCLLCTQLKIPCTYHLPPIKRNKQKKQQDSVSDDTPSEATTTTNDDRDPKYNALGNNLDAVRGKVISPTQGSDARGPDGRQVPLNLAGITEMYHTSDDKFDKLGLDDSLNYPYVLGPTCDSDIDLIREYFSFENGVCSFDNMTVKYVSTSSKSPVMYILDPAYENDRHSDFSRYDHALHDLLSTYIDEATGRTLVNLYFSHVHPSYPILHGPRFLLSYKNGSRNVPSILLAALYSVALTYWPSDSRSFGAPPLDQRKMWTIVEEGLNFHFTQPRLSTIQAALLYLISRPLHNMYSLSSILSRTTVLSQLLGFNHDCTEWKIPNEEKTIRKRIWWAIFIADKWYSMYFGLATNIHEDDFVVPKIESDESLPLEITSSHSFKTFLKMIELSSLLQDILQDLFTVRALTRHSKNNRSISYQIIGFFTRLNSIRPVEFTEPALGVASLKIQFDAVEILLWKTALRFNLPDFQSADDLFVCVEKSVSNFVQITANSSGDFFWPYAGFHFSTLVSLLIRLHLDFHTNNTYGARAFSLLDAFVRHCITLHEAGFDFVEMAIRRSSSLLKELGKDHPHLLALRDDIFNSNDSRGEEAYNHVPEQLFDPWNPHSWTFPKSD</sequence>
<protein>
    <recommendedName>
        <fullName>Uncharacterized transcriptional regulatory protein C25B8.11</fullName>
    </recommendedName>
</protein>
<proteinExistence type="inferred from homology"/>
<gene>
    <name type="ORF">SPAC25B8.11</name>
</gene>
<name>YL8B_SCHPO</name>
<comment type="subcellular location">
    <subcellularLocation>
        <location evidence="3">Cytoplasm</location>
    </subcellularLocation>
    <subcellularLocation>
        <location evidence="1 3">Nucleus</location>
    </subcellularLocation>
</comment>
<organism>
    <name type="scientific">Schizosaccharomyces pombe (strain 972 / ATCC 24843)</name>
    <name type="common">Fission yeast</name>
    <dbReference type="NCBI Taxonomy" id="284812"/>
    <lineage>
        <taxon>Eukaryota</taxon>
        <taxon>Fungi</taxon>
        <taxon>Dikarya</taxon>
        <taxon>Ascomycota</taxon>
        <taxon>Taphrinomycotina</taxon>
        <taxon>Schizosaccharomycetes</taxon>
        <taxon>Schizosaccharomycetales</taxon>
        <taxon>Schizosaccharomycetaceae</taxon>
        <taxon>Schizosaccharomyces</taxon>
    </lineage>
</organism>
<evidence type="ECO:0000255" key="1">
    <source>
        <dbReference type="PROSITE-ProRule" id="PRU00227"/>
    </source>
</evidence>
<evidence type="ECO:0000256" key="2">
    <source>
        <dbReference type="SAM" id="MobiDB-lite"/>
    </source>
</evidence>
<evidence type="ECO:0000269" key="3">
    <source>
    </source>
</evidence>
<keyword id="KW-0963">Cytoplasm</keyword>
<keyword id="KW-0238">DNA-binding</keyword>
<keyword id="KW-0479">Metal-binding</keyword>
<keyword id="KW-0539">Nucleus</keyword>
<keyword id="KW-1185">Reference proteome</keyword>
<keyword id="KW-0804">Transcription</keyword>
<keyword id="KW-0805">Transcription regulation</keyword>
<keyword id="KW-0862">Zinc</keyword>
<reference key="1">
    <citation type="journal article" date="2002" name="Nature">
        <title>The genome sequence of Schizosaccharomyces pombe.</title>
        <authorList>
            <person name="Wood V."/>
            <person name="Gwilliam R."/>
            <person name="Rajandream M.A."/>
            <person name="Lyne M.H."/>
            <person name="Lyne R."/>
            <person name="Stewart A."/>
            <person name="Sgouros J.G."/>
            <person name="Peat N."/>
            <person name="Hayles J."/>
            <person name="Baker S.G."/>
            <person name="Basham D."/>
            <person name="Bowman S."/>
            <person name="Brooks K."/>
            <person name="Brown D."/>
            <person name="Brown S."/>
            <person name="Chillingworth T."/>
            <person name="Churcher C.M."/>
            <person name="Collins M."/>
            <person name="Connor R."/>
            <person name="Cronin A."/>
            <person name="Davis P."/>
            <person name="Feltwell T."/>
            <person name="Fraser A."/>
            <person name="Gentles S."/>
            <person name="Goble A."/>
            <person name="Hamlin N."/>
            <person name="Harris D.E."/>
            <person name="Hidalgo J."/>
            <person name="Hodgson G."/>
            <person name="Holroyd S."/>
            <person name="Hornsby T."/>
            <person name="Howarth S."/>
            <person name="Huckle E.J."/>
            <person name="Hunt S."/>
            <person name="Jagels K."/>
            <person name="James K.D."/>
            <person name="Jones L."/>
            <person name="Jones M."/>
            <person name="Leather S."/>
            <person name="McDonald S."/>
            <person name="McLean J."/>
            <person name="Mooney P."/>
            <person name="Moule S."/>
            <person name="Mungall K.L."/>
            <person name="Murphy L.D."/>
            <person name="Niblett D."/>
            <person name="Odell C."/>
            <person name="Oliver K."/>
            <person name="O'Neil S."/>
            <person name="Pearson D."/>
            <person name="Quail M.A."/>
            <person name="Rabbinowitsch E."/>
            <person name="Rutherford K.M."/>
            <person name="Rutter S."/>
            <person name="Saunders D."/>
            <person name="Seeger K."/>
            <person name="Sharp S."/>
            <person name="Skelton J."/>
            <person name="Simmonds M.N."/>
            <person name="Squares R."/>
            <person name="Squares S."/>
            <person name="Stevens K."/>
            <person name="Taylor K."/>
            <person name="Taylor R.G."/>
            <person name="Tivey A."/>
            <person name="Walsh S.V."/>
            <person name="Warren T."/>
            <person name="Whitehead S."/>
            <person name="Woodward J.R."/>
            <person name="Volckaert G."/>
            <person name="Aert R."/>
            <person name="Robben J."/>
            <person name="Grymonprez B."/>
            <person name="Weltjens I."/>
            <person name="Vanstreels E."/>
            <person name="Rieger M."/>
            <person name="Schaefer M."/>
            <person name="Mueller-Auer S."/>
            <person name="Gabel C."/>
            <person name="Fuchs M."/>
            <person name="Duesterhoeft A."/>
            <person name="Fritzc C."/>
            <person name="Holzer E."/>
            <person name="Moestl D."/>
            <person name="Hilbert H."/>
            <person name="Borzym K."/>
            <person name="Langer I."/>
            <person name="Beck A."/>
            <person name="Lehrach H."/>
            <person name="Reinhardt R."/>
            <person name="Pohl T.M."/>
            <person name="Eger P."/>
            <person name="Zimmermann W."/>
            <person name="Wedler H."/>
            <person name="Wambutt R."/>
            <person name="Purnelle B."/>
            <person name="Goffeau A."/>
            <person name="Cadieu E."/>
            <person name="Dreano S."/>
            <person name="Gloux S."/>
            <person name="Lelaure V."/>
            <person name="Mottier S."/>
            <person name="Galibert F."/>
            <person name="Aves S.J."/>
            <person name="Xiang Z."/>
            <person name="Hunt C."/>
            <person name="Moore K."/>
            <person name="Hurst S.M."/>
            <person name="Lucas M."/>
            <person name="Rochet M."/>
            <person name="Gaillardin C."/>
            <person name="Tallada V.A."/>
            <person name="Garzon A."/>
            <person name="Thode G."/>
            <person name="Daga R.R."/>
            <person name="Cruzado L."/>
            <person name="Jimenez J."/>
            <person name="Sanchez M."/>
            <person name="del Rey F."/>
            <person name="Benito J."/>
            <person name="Dominguez A."/>
            <person name="Revuelta J.L."/>
            <person name="Moreno S."/>
            <person name="Armstrong J."/>
            <person name="Forsburg S.L."/>
            <person name="Cerutti L."/>
            <person name="Lowe T."/>
            <person name="McCombie W.R."/>
            <person name="Paulsen I."/>
            <person name="Potashkin J."/>
            <person name="Shpakovski G.V."/>
            <person name="Ussery D."/>
            <person name="Barrell B.G."/>
            <person name="Nurse P."/>
        </authorList>
    </citation>
    <scope>NUCLEOTIDE SEQUENCE [LARGE SCALE GENOMIC DNA]</scope>
    <source>
        <strain>972 / ATCC 24843</strain>
    </source>
</reference>
<reference key="2">
    <citation type="journal article" date="2006" name="Nat. Biotechnol.">
        <title>ORFeome cloning and global analysis of protein localization in the fission yeast Schizosaccharomyces pombe.</title>
        <authorList>
            <person name="Matsuyama A."/>
            <person name="Arai R."/>
            <person name="Yashiroda Y."/>
            <person name="Shirai A."/>
            <person name="Kamata A."/>
            <person name="Sekido S."/>
            <person name="Kobayashi Y."/>
            <person name="Hashimoto A."/>
            <person name="Hamamoto M."/>
            <person name="Hiraoka Y."/>
            <person name="Horinouchi S."/>
            <person name="Yoshida M."/>
        </authorList>
    </citation>
    <scope>SUBCELLULAR LOCATION [LARGE SCALE ANALYSIS]</scope>
</reference>
<feature type="chain" id="PRO_0000310389" description="Uncharacterized transcriptional regulatory protein C25B8.11">
    <location>
        <begin position="1"/>
        <end position="654"/>
    </location>
</feature>
<feature type="DNA-binding region" description="Zn(2)-C6 fungal-type" evidence="1">
    <location>
        <begin position="25"/>
        <end position="54"/>
    </location>
</feature>
<feature type="region of interest" description="Disordered" evidence="2">
    <location>
        <begin position="1"/>
        <end position="23"/>
    </location>
</feature>
<feature type="region of interest" description="Disordered" evidence="2">
    <location>
        <begin position="63"/>
        <end position="96"/>
    </location>
</feature>
<feature type="compositionally biased region" description="Polar residues" evidence="2">
    <location>
        <begin position="1"/>
        <end position="13"/>
    </location>
</feature>
<dbReference type="EMBL" id="CU329670">
    <property type="protein sequence ID" value="CAB61777.1"/>
    <property type="molecule type" value="Genomic_DNA"/>
</dbReference>
<dbReference type="PIR" id="T50198">
    <property type="entry name" value="T50198"/>
</dbReference>
<dbReference type="RefSeq" id="NP_594471.1">
    <property type="nucleotide sequence ID" value="NM_001019900.2"/>
</dbReference>
<dbReference type="BioGRID" id="278071">
    <property type="interactions" value="4"/>
</dbReference>
<dbReference type="FunCoup" id="Q9UTA7">
    <property type="interactions" value="271"/>
</dbReference>
<dbReference type="iPTMnet" id="Q9UTA7"/>
<dbReference type="PaxDb" id="4896-SPAC25B8.11.1"/>
<dbReference type="EnsemblFungi" id="SPAC25B8.11.1">
    <property type="protein sequence ID" value="SPAC25B8.11.1:pep"/>
    <property type="gene ID" value="SPAC25B8.11"/>
</dbReference>
<dbReference type="KEGG" id="spo:2541574"/>
<dbReference type="PomBase" id="SPAC25B8.11"/>
<dbReference type="VEuPathDB" id="FungiDB:SPAC25B8.11"/>
<dbReference type="eggNOG" id="ENOG502QQXX">
    <property type="taxonomic scope" value="Eukaryota"/>
</dbReference>
<dbReference type="HOGENOM" id="CLU_006632_1_1_1"/>
<dbReference type="InParanoid" id="Q9UTA7"/>
<dbReference type="OMA" id="QILERYM"/>
<dbReference type="PhylomeDB" id="Q9UTA7"/>
<dbReference type="PRO" id="PR:Q9UTA7"/>
<dbReference type="Proteomes" id="UP000002485">
    <property type="component" value="Chromosome I"/>
</dbReference>
<dbReference type="GO" id="GO:0005829">
    <property type="term" value="C:cytosol"/>
    <property type="evidence" value="ECO:0007005"/>
    <property type="project" value="PomBase"/>
</dbReference>
<dbReference type="GO" id="GO:0005634">
    <property type="term" value="C:nucleus"/>
    <property type="evidence" value="ECO:0007005"/>
    <property type="project" value="PomBase"/>
</dbReference>
<dbReference type="GO" id="GO:0000981">
    <property type="term" value="F:DNA-binding transcription factor activity, RNA polymerase II-specific"/>
    <property type="evidence" value="ECO:0007669"/>
    <property type="project" value="InterPro"/>
</dbReference>
<dbReference type="GO" id="GO:0000978">
    <property type="term" value="F:RNA polymerase II cis-regulatory region sequence-specific DNA binding"/>
    <property type="evidence" value="ECO:0000255"/>
    <property type="project" value="PomBase"/>
</dbReference>
<dbReference type="GO" id="GO:0008270">
    <property type="term" value="F:zinc ion binding"/>
    <property type="evidence" value="ECO:0000255"/>
    <property type="project" value="PomBase"/>
</dbReference>
<dbReference type="GO" id="GO:0006351">
    <property type="term" value="P:DNA-templated transcription"/>
    <property type="evidence" value="ECO:0007669"/>
    <property type="project" value="InterPro"/>
</dbReference>
<dbReference type="GO" id="GO:0006357">
    <property type="term" value="P:regulation of transcription by RNA polymerase II"/>
    <property type="evidence" value="ECO:0000255"/>
    <property type="project" value="PomBase"/>
</dbReference>
<dbReference type="CDD" id="cd12148">
    <property type="entry name" value="fungal_TF_MHR"/>
    <property type="match status" value="1"/>
</dbReference>
<dbReference type="CDD" id="cd00067">
    <property type="entry name" value="GAL4"/>
    <property type="match status" value="1"/>
</dbReference>
<dbReference type="Gene3D" id="4.10.240.10">
    <property type="entry name" value="Zn(2)-C6 fungal-type DNA-binding domain"/>
    <property type="match status" value="1"/>
</dbReference>
<dbReference type="InterPro" id="IPR050797">
    <property type="entry name" value="Carb_Metab_Trans_Reg"/>
</dbReference>
<dbReference type="InterPro" id="IPR007219">
    <property type="entry name" value="Transcription_factor_dom_fun"/>
</dbReference>
<dbReference type="InterPro" id="IPR036864">
    <property type="entry name" value="Zn2-C6_fun-type_DNA-bd_sf"/>
</dbReference>
<dbReference type="InterPro" id="IPR001138">
    <property type="entry name" value="Zn2Cys6_DnaBD"/>
</dbReference>
<dbReference type="PANTHER" id="PTHR31668">
    <property type="entry name" value="GLUCOSE TRANSPORT TRANSCRIPTION REGULATOR RGT1-RELATED-RELATED"/>
    <property type="match status" value="1"/>
</dbReference>
<dbReference type="PANTHER" id="PTHR31668:SF4">
    <property type="entry name" value="TRANSCRIPTIONAL ACTIVATOR PROTEIN DAL81"/>
    <property type="match status" value="1"/>
</dbReference>
<dbReference type="Pfam" id="PF04082">
    <property type="entry name" value="Fungal_trans"/>
    <property type="match status" value="1"/>
</dbReference>
<dbReference type="Pfam" id="PF00172">
    <property type="entry name" value="Zn_clus"/>
    <property type="match status" value="1"/>
</dbReference>
<dbReference type="SMART" id="SM00906">
    <property type="entry name" value="Fungal_trans"/>
    <property type="match status" value="1"/>
</dbReference>
<dbReference type="SMART" id="SM00066">
    <property type="entry name" value="GAL4"/>
    <property type="match status" value="1"/>
</dbReference>
<dbReference type="SUPFAM" id="SSF57701">
    <property type="entry name" value="Zn2/Cys6 DNA-binding domain"/>
    <property type="match status" value="1"/>
</dbReference>
<dbReference type="PROSITE" id="PS00463">
    <property type="entry name" value="ZN2_CY6_FUNGAL_1"/>
    <property type="match status" value="1"/>
</dbReference>
<dbReference type="PROSITE" id="PS50048">
    <property type="entry name" value="ZN2_CY6_FUNGAL_2"/>
    <property type="match status" value="1"/>
</dbReference>